<proteinExistence type="evidence at protein level"/>
<reference key="1">
    <citation type="journal article" date="1999" name="J. Virol.">
        <title>Identification of a spliced gene from Kaposi's sarcoma-associated herpesvirus encoding a protein with similarities to latent membrane proteins 1 and 2A of Epstein-Barr virus.</title>
        <authorList>
            <person name="Glenn M."/>
            <person name="Rainbow L."/>
            <person name="Aurade F."/>
            <person name="Davison A."/>
            <person name="Schulz T.F."/>
        </authorList>
    </citation>
    <scope>NUCLEOTIDE SEQUENCE [LARGE SCALE GENOMIC DNA]</scope>
</reference>
<reference key="2">
    <citation type="journal article" date="2006" name="J. Gen. Virol.">
        <title>Kaposi's sarcoma-associated herpesvirus immune modulation: an overview.</title>
        <authorList>
            <person name="Rezaee S.A.R."/>
            <person name="Cunningham C."/>
            <person name="Davison A.J."/>
            <person name="Blackbourn D.J."/>
        </authorList>
    </citation>
    <scope>NUCLEOTIDE SEQUENCE [LARGE SCALE GENOMIC DNA]</scope>
</reference>
<reference key="3">
    <citation type="journal article" date="2011" name="J. Struct. Biol.">
        <title>The Kaposi's sarcoma-associated herpesvirus ORF6 DNA binding protein forms long DNA-free helical protein filaments.</title>
        <authorList>
            <person name="Ozgur S."/>
            <person name="Damania B."/>
            <person name="Griffith J."/>
        </authorList>
    </citation>
    <scope>SUBUNIT</scope>
</reference>
<feature type="chain" id="PRO_0000423834" description="Major DNA-binding protein">
    <location>
        <begin position="1"/>
        <end position="1132"/>
    </location>
</feature>
<feature type="region of interest" description="Required for nuclear localization" evidence="1">
    <location>
        <begin position="1103"/>
        <end position="1132"/>
    </location>
</feature>
<name>DNBI_HHV8P</name>
<evidence type="ECO:0000255" key="1">
    <source>
        <dbReference type="HAMAP-Rule" id="MF_04007"/>
    </source>
</evidence>
<evidence type="ECO:0000269" key="2">
    <source>
    </source>
</evidence>
<accession>Q2HRD3</accession>
<sequence length="1132" mass="125409">MALKGPQTLEENIGSAAPTGPCGYLYAYVTHNFPIGEASLLGNGYPEAKVFSLPLLHGLTVESDFPLNVKAVHKKIDATTASVKLTSYHREAIVFHNTHLFQPIFQGKGLEKLCRESRELFGFSTFVEQQHKGTLWSPEACPQLPCANEIFMAVIVTEGFKERLYGGKLVPVPSQTTPVHIGEHQAFKIPLYDEDLFGPSRAQELCRFYNPDISRYLHDSIFTGIAQALRVKDVSTVIQASERQFVHDQYKIPKLVQAKDFPQCASRGTDGSTLMVIDSLVAELGMSYGLSFIEGPQDSCEVLNYDTWPIFENCETPDARLRALEVWHAEQALHIGAQLFAANSVLYLTRVAKLPQKNQRGDANMYNSFYLQHGLGYLSEATVKENGASAFKGVPVSALDGSSYTLQHLAYASSFSPHLLARMCYYLQFLPHHKNTNSQSYNVVDYVGTAAPSQMCDLCQGQCPAVCINTLFYRMKDRFPPVLSNVKRDPYVITGTAGTYNDLEILGNFATFREREEEGNPVEDAPKYTYWQLCQNITEKLASMGISEGGDALRTLIVDIPSFVKVFKGIDSTVEAELLKFINCMIKNNYNFRENIKSVHHILQFACNVYWQAPCPVFLTLYYKSLLTVIQDICLTSCMMYEQDNPAVGIVPSEWLKMHFQTMWTNFKGACFDKGAITGGELKIVHQSMFCDLFDTDAAIGGMFAPARMQVRIARAMLMVPKTIKIKNRIIFSNSTGAESIQAGFMKPASQRDSYIVGGPYMKFLNALHKTLFPSTKTSALYLWHKIGQTTKNPILPGVSGEHLTELCNYVKASSQAFEEINVLDLVPDTLTSYAKIKLNSSILRACGQTQFYATTLSCLSPVTQLVPAEEYPHVLGPVGLSSPDEYRVKVAGRSVTIVQSTLKQAVSTNGRLRPIITVPLVVNKYTGSNGNTNVFHCANLGYFSGRGVDRNLRPESVPFKKNNVSSMLRKRHVIMTPLVDRLVKRIVGINSGEFEAEAVKRSVQNVLEDRDNPNLPKTVVLELVKHLGSSCASLTEEDVIYYLGPYAVLGDEVLSLLSTVGQAGVPWTAEGVASVIQDIIDDCELQFVGPEEPCLIQGQSVVEELFPSPGVPSLTVGKKRKIASLLSDLDL</sequence>
<comment type="function">
    <text evidence="1">Plays several crucial roles in viral infection. Participates in the opening of the viral DNA origin to initiate replication by interacting with the origin-binding protein. May disrupt loops, hairpins and other secondary structures present on ssDNA to reduce and eliminate pausing of viral DNA polymerase at specific sites during elongation. Promotes viral DNA recombination by performing strand-transfer, characterized by the ability to transfer a DNA strand from a linear duplex to a complementary single-stranded DNA circle. Can also catalyze the renaturation of complementary single strands. Additionally, reorganizes the host cell nucleus, leading to the formation of prereplicative sites and replication compartments. This process is driven by the protein which can form double-helical filaments in the absence of DNA.</text>
</comment>
<comment type="subunit">
    <text evidence="1 2">Homooligomers. Forms double-helical filaments necessary for the formation of replication compartments within the host nucleus. Interacts with the origin-binding protein. Interacts with the helicase primase complex; this interaction stimulates primer synthesis activity of the helicase-primase complex. Interacts with the DNA polymerase. Interacts with the alkaline exonuclease; this interaction increases its nuclease processivity.</text>
</comment>
<comment type="subcellular location">
    <subcellularLocation>
        <location evidence="1">Host nucleus</location>
    </subcellularLocation>
    <text evidence="1">In the absence of DNA replication, found in the nuclear framework-associated structures (prereplicative sites). As viral DNA replication proceeds, it migrates to globular intranuclear structures (replication compartments).</text>
</comment>
<comment type="similarity">
    <text evidence="1">Belongs to the herpesviridae major DNA-binding protein family.</text>
</comment>
<organism>
    <name type="scientific">Human herpesvirus 8 type P (isolate GK18)</name>
    <name type="common">HHV-8</name>
    <name type="synonym">Kaposi's sarcoma-associated herpesvirus</name>
    <dbReference type="NCBI Taxonomy" id="868565"/>
    <lineage>
        <taxon>Viruses</taxon>
        <taxon>Duplodnaviria</taxon>
        <taxon>Heunggongvirae</taxon>
        <taxon>Peploviricota</taxon>
        <taxon>Herviviricetes</taxon>
        <taxon>Herpesvirales</taxon>
        <taxon>Orthoherpesviridae</taxon>
        <taxon>Gammaherpesvirinae</taxon>
        <taxon>Rhadinovirus</taxon>
        <taxon>Rhadinovirus humangamma8</taxon>
        <taxon>Human herpesvirus 8</taxon>
    </lineage>
</organism>
<dbReference type="EMBL" id="AF148805">
    <property type="protein sequence ID" value="ABD28849.1"/>
    <property type="molecule type" value="Genomic_DNA"/>
</dbReference>
<dbReference type="RefSeq" id="YP_001129352.1">
    <property type="nucleotide sequence ID" value="NC_009333.1"/>
</dbReference>
<dbReference type="SMR" id="Q2HRD3"/>
<dbReference type="BioGRID" id="1777024">
    <property type="interactions" value="2"/>
</dbReference>
<dbReference type="DNASU" id="4961521"/>
<dbReference type="GeneID" id="4961521"/>
<dbReference type="KEGG" id="vg:4961521"/>
<dbReference type="Proteomes" id="UP000000942">
    <property type="component" value="Segment"/>
</dbReference>
<dbReference type="GO" id="GO:0042025">
    <property type="term" value="C:host cell nucleus"/>
    <property type="evidence" value="ECO:0007669"/>
    <property type="project" value="UniProtKB-SubCell"/>
</dbReference>
<dbReference type="GO" id="GO:0003697">
    <property type="term" value="F:single-stranded DNA binding"/>
    <property type="evidence" value="ECO:0007669"/>
    <property type="project" value="InterPro"/>
</dbReference>
<dbReference type="GO" id="GO:0039686">
    <property type="term" value="P:bidirectional double-stranded viral DNA replication"/>
    <property type="evidence" value="ECO:0000314"/>
    <property type="project" value="UniProtKB"/>
</dbReference>
<dbReference type="GO" id="GO:0006260">
    <property type="term" value="P:DNA replication"/>
    <property type="evidence" value="ECO:0007669"/>
    <property type="project" value="UniProtKB-KW"/>
</dbReference>
<dbReference type="Gene3D" id="1.20.190.40">
    <property type="entry name" value="Viral ssDNA binding protein, head domain"/>
    <property type="match status" value="2"/>
</dbReference>
<dbReference type="HAMAP" id="MF_04007">
    <property type="entry name" value="HSV_DNBI"/>
    <property type="match status" value="1"/>
</dbReference>
<dbReference type="InterPro" id="IPR035989">
    <property type="entry name" value="DBP_sf"/>
</dbReference>
<dbReference type="InterPro" id="IPR043031">
    <property type="entry name" value="Viral_ssDBP_head"/>
</dbReference>
<dbReference type="InterPro" id="IPR000635">
    <property type="entry name" value="Viral_ssDNA-bd"/>
</dbReference>
<dbReference type="Pfam" id="PF00747">
    <property type="entry name" value="Viral_DNA_bp"/>
    <property type="match status" value="1"/>
</dbReference>
<dbReference type="SUPFAM" id="SSF118208">
    <property type="entry name" value="Viral ssDNA binding protein"/>
    <property type="match status" value="1"/>
</dbReference>
<gene>
    <name evidence="1" type="primary">DBP</name>
    <name type="synonym">ORF6</name>
</gene>
<keyword id="KW-0235">DNA replication</keyword>
<keyword id="KW-0238">DNA-binding</keyword>
<keyword id="KW-1048">Host nucleus</keyword>
<keyword id="KW-1185">Reference proteome</keyword>
<organismHost>
    <name type="scientific">Homo sapiens</name>
    <name type="common">Human</name>
    <dbReference type="NCBI Taxonomy" id="9606"/>
</organismHost>
<protein>
    <recommendedName>
        <fullName evidence="1">Major DNA-binding protein</fullName>
    </recommendedName>
</protein>